<feature type="chain" id="PRO_0000255794" description="Putative glutamate--cysteine ligase 2">
    <location>
        <begin position="1"/>
        <end position="371"/>
    </location>
</feature>
<gene>
    <name type="ordered locus">BURPS1710b_0214</name>
</gene>
<sequence>MALETFVNSEPFTFGVELEIQIVNTHNYDLTKAASDLMRLIKDAKFPGNITPEITESMIELSTGICRTHDQALGELHAIRDTLVSAADQLNVGLCGGGTHAFQQWSERQIFDAPRFQYISELYGYLAKQFTVFGQHVHIGCPDADSALFLLHSMSRFIPHFIALSASSPYVQNVDTGFHSARLNSVFAFPLSGRAPFVLTWHGFEEYFTKMVNTGVVNSMKDFYWDIRPKPGYGTIEVRVMDTPLSVDRAAAIACYIQTLARYLLIDRPLKLSEDDYLVYTFNRFEACRFGLEGTCVNPQTGERRTIAEDILDTLDRIAPHAAALGSRAALDEIGALAKARVNDASWLRTIFKQEKSLNETVRQQCLRWRE</sequence>
<evidence type="ECO:0000255" key="1">
    <source>
        <dbReference type="HAMAP-Rule" id="MF_01609"/>
    </source>
</evidence>
<evidence type="ECO:0000305" key="2"/>
<protein>
    <recommendedName>
        <fullName evidence="1">Putative glutamate--cysteine ligase 2</fullName>
        <ecNumber evidence="1">6.3.2.2</ecNumber>
    </recommendedName>
    <alternativeName>
        <fullName evidence="1">Gamma-glutamylcysteine synthetase 2</fullName>
        <shortName evidence="1">GCS 2</shortName>
        <shortName evidence="1">Gamma-GCS 2</shortName>
    </alternativeName>
</protein>
<name>GCS2_BURP1</name>
<accession>Q3JXS3</accession>
<organism>
    <name type="scientific">Burkholderia pseudomallei (strain 1710b)</name>
    <dbReference type="NCBI Taxonomy" id="320372"/>
    <lineage>
        <taxon>Bacteria</taxon>
        <taxon>Pseudomonadati</taxon>
        <taxon>Pseudomonadota</taxon>
        <taxon>Betaproteobacteria</taxon>
        <taxon>Burkholderiales</taxon>
        <taxon>Burkholderiaceae</taxon>
        <taxon>Burkholderia</taxon>
        <taxon>pseudomallei group</taxon>
    </lineage>
</organism>
<reference key="1">
    <citation type="journal article" date="2010" name="Genome Biol. Evol.">
        <title>Continuing evolution of Burkholderia mallei through genome reduction and large-scale rearrangements.</title>
        <authorList>
            <person name="Losada L."/>
            <person name="Ronning C.M."/>
            <person name="DeShazer D."/>
            <person name="Woods D."/>
            <person name="Fedorova N."/>
            <person name="Kim H.S."/>
            <person name="Shabalina S.A."/>
            <person name="Pearson T.R."/>
            <person name="Brinkac L."/>
            <person name="Tan P."/>
            <person name="Nandi T."/>
            <person name="Crabtree J."/>
            <person name="Badger J."/>
            <person name="Beckstrom-Sternberg S."/>
            <person name="Saqib M."/>
            <person name="Schutzer S.E."/>
            <person name="Keim P."/>
            <person name="Nierman W.C."/>
        </authorList>
    </citation>
    <scope>NUCLEOTIDE SEQUENCE [LARGE SCALE GENOMIC DNA]</scope>
    <source>
        <strain>1710b</strain>
    </source>
</reference>
<keyword id="KW-0067">ATP-binding</keyword>
<keyword id="KW-0436">Ligase</keyword>
<keyword id="KW-0547">Nucleotide-binding</keyword>
<proteinExistence type="inferred from homology"/>
<dbReference type="EC" id="6.3.2.2" evidence="1"/>
<dbReference type="EMBL" id="CP000124">
    <property type="protein sequence ID" value="ABA47831.1"/>
    <property type="status" value="ALT_INIT"/>
    <property type="molecule type" value="Genomic_DNA"/>
</dbReference>
<dbReference type="RefSeq" id="WP_004195787.1">
    <property type="nucleotide sequence ID" value="NC_007434.1"/>
</dbReference>
<dbReference type="SMR" id="Q3JXS3"/>
<dbReference type="EnsemblBacteria" id="ABA47831">
    <property type="protein sequence ID" value="ABA47831"/>
    <property type="gene ID" value="BURPS1710b_0214"/>
</dbReference>
<dbReference type="KEGG" id="bpm:BURPS1710b_0214"/>
<dbReference type="HOGENOM" id="CLU_044848_1_1_4"/>
<dbReference type="Proteomes" id="UP000002700">
    <property type="component" value="Chromosome I"/>
</dbReference>
<dbReference type="GO" id="GO:0005524">
    <property type="term" value="F:ATP binding"/>
    <property type="evidence" value="ECO:0007669"/>
    <property type="project" value="UniProtKB-KW"/>
</dbReference>
<dbReference type="GO" id="GO:0004357">
    <property type="term" value="F:glutamate-cysteine ligase activity"/>
    <property type="evidence" value="ECO:0007669"/>
    <property type="project" value="UniProtKB-EC"/>
</dbReference>
<dbReference type="GO" id="GO:0042398">
    <property type="term" value="P:modified amino acid biosynthetic process"/>
    <property type="evidence" value="ECO:0007669"/>
    <property type="project" value="InterPro"/>
</dbReference>
<dbReference type="Gene3D" id="3.30.590.20">
    <property type="match status" value="1"/>
</dbReference>
<dbReference type="HAMAP" id="MF_01609">
    <property type="entry name" value="Glu_cys_ligase_2"/>
    <property type="match status" value="1"/>
</dbReference>
<dbReference type="InterPro" id="IPR050141">
    <property type="entry name" value="GCL_type2/YbdK_subfam"/>
</dbReference>
<dbReference type="InterPro" id="IPR006336">
    <property type="entry name" value="GCS2"/>
</dbReference>
<dbReference type="InterPro" id="IPR014746">
    <property type="entry name" value="Gln_synth/guanido_kin_cat_dom"/>
</dbReference>
<dbReference type="InterPro" id="IPR011793">
    <property type="entry name" value="YbdK"/>
</dbReference>
<dbReference type="NCBIfam" id="TIGR02050">
    <property type="entry name" value="gshA_cyan_rel"/>
    <property type="match status" value="1"/>
</dbReference>
<dbReference type="NCBIfam" id="NF010040">
    <property type="entry name" value="PRK13516.1"/>
    <property type="match status" value="1"/>
</dbReference>
<dbReference type="PANTHER" id="PTHR36510">
    <property type="entry name" value="GLUTAMATE--CYSTEINE LIGASE 2-RELATED"/>
    <property type="match status" value="1"/>
</dbReference>
<dbReference type="PANTHER" id="PTHR36510:SF1">
    <property type="entry name" value="GLUTAMATE--CYSTEINE LIGASE 2-RELATED"/>
    <property type="match status" value="1"/>
</dbReference>
<dbReference type="Pfam" id="PF04107">
    <property type="entry name" value="GCS2"/>
    <property type="match status" value="1"/>
</dbReference>
<dbReference type="SUPFAM" id="SSF55931">
    <property type="entry name" value="Glutamine synthetase/guanido kinase"/>
    <property type="match status" value="1"/>
</dbReference>
<comment type="function">
    <text evidence="1">ATP-dependent carboxylate-amine ligase which exhibits weak glutamate--cysteine ligase activity.</text>
</comment>
<comment type="catalytic activity">
    <reaction evidence="1">
        <text>L-cysteine + L-glutamate + ATP = gamma-L-glutamyl-L-cysteine + ADP + phosphate + H(+)</text>
        <dbReference type="Rhea" id="RHEA:13285"/>
        <dbReference type="ChEBI" id="CHEBI:15378"/>
        <dbReference type="ChEBI" id="CHEBI:29985"/>
        <dbReference type="ChEBI" id="CHEBI:30616"/>
        <dbReference type="ChEBI" id="CHEBI:35235"/>
        <dbReference type="ChEBI" id="CHEBI:43474"/>
        <dbReference type="ChEBI" id="CHEBI:58173"/>
        <dbReference type="ChEBI" id="CHEBI:456216"/>
        <dbReference type="EC" id="6.3.2.2"/>
    </reaction>
</comment>
<comment type="similarity">
    <text evidence="1">Belongs to the glutamate--cysteine ligase type 2 family. YbdK subfamily.</text>
</comment>
<comment type="sequence caution" evidence="2">
    <conflict type="erroneous initiation">
        <sequence resource="EMBL-CDS" id="ABA47831"/>
    </conflict>
</comment>